<reference key="1">
    <citation type="journal article" date="2008" name="DNA Res.">
        <title>Comparative genome analysis of Lactobacillus reuteri and Lactobacillus fermentum reveal a genomic island for reuterin and cobalamin production.</title>
        <authorList>
            <person name="Morita H."/>
            <person name="Toh H."/>
            <person name="Fukuda S."/>
            <person name="Horikawa H."/>
            <person name="Oshima K."/>
            <person name="Suzuki T."/>
            <person name="Murakami M."/>
            <person name="Hisamatsu S."/>
            <person name="Kato Y."/>
            <person name="Takizawa T."/>
            <person name="Fukuoka H."/>
            <person name="Yoshimura T."/>
            <person name="Itoh K."/>
            <person name="O'Sullivan D.J."/>
            <person name="McKay L.L."/>
            <person name="Ohno H."/>
            <person name="Kikuchi J."/>
            <person name="Masaoka T."/>
            <person name="Hattori M."/>
        </authorList>
    </citation>
    <scope>NUCLEOTIDE SEQUENCE [LARGE SCALE GENOMIC DNA]</scope>
    <source>
        <strain>JCM 1112</strain>
    </source>
</reference>
<sequence length="122" mass="13144">MIQQESRLKVADNSGAREILVIKILGGSRVKTGNIGDIIVATVKQATPGGVVKKGDVVKAVVVRTKHGIHRKDGSYIKFDENAAVLINNDKSPKGTRIFGPIARELRGDDFMKIVSLAPEVL</sequence>
<comment type="function">
    <text evidence="1">Binds to 23S rRNA. Forms part of two intersubunit bridges in the 70S ribosome.</text>
</comment>
<comment type="subunit">
    <text evidence="1">Part of the 50S ribosomal subunit. Forms a cluster with proteins L3 and L19. In the 70S ribosome, L14 and L19 interact and together make contacts with the 16S rRNA in bridges B5 and B8.</text>
</comment>
<comment type="similarity">
    <text evidence="1">Belongs to the universal ribosomal protein uL14 family.</text>
</comment>
<keyword id="KW-0687">Ribonucleoprotein</keyword>
<keyword id="KW-0689">Ribosomal protein</keyword>
<keyword id="KW-0694">RNA-binding</keyword>
<keyword id="KW-0699">rRNA-binding</keyword>
<organism>
    <name type="scientific">Limosilactobacillus reuteri subsp. reuteri (strain JCM 1112)</name>
    <name type="common">Lactobacillus reuteri</name>
    <dbReference type="NCBI Taxonomy" id="557433"/>
    <lineage>
        <taxon>Bacteria</taxon>
        <taxon>Bacillati</taxon>
        <taxon>Bacillota</taxon>
        <taxon>Bacilli</taxon>
        <taxon>Lactobacillales</taxon>
        <taxon>Lactobacillaceae</taxon>
        <taxon>Limosilactobacillus</taxon>
    </lineage>
</organism>
<evidence type="ECO:0000255" key="1">
    <source>
        <dbReference type="HAMAP-Rule" id="MF_01367"/>
    </source>
</evidence>
<evidence type="ECO:0000305" key="2"/>
<gene>
    <name evidence="1" type="primary">rplN</name>
    <name type="ordered locus">LAR_1384</name>
</gene>
<proteinExistence type="inferred from homology"/>
<feature type="chain" id="PRO_1000144289" description="Large ribosomal subunit protein uL14">
    <location>
        <begin position="1"/>
        <end position="122"/>
    </location>
</feature>
<protein>
    <recommendedName>
        <fullName evidence="1">Large ribosomal subunit protein uL14</fullName>
    </recommendedName>
    <alternativeName>
        <fullName evidence="2">50S ribosomal protein L14</fullName>
    </alternativeName>
</protein>
<name>RL14_LIMRJ</name>
<accession>B2G8W8</accession>
<dbReference type="EMBL" id="AP007281">
    <property type="protein sequence ID" value="BAG25900.1"/>
    <property type="molecule type" value="Genomic_DNA"/>
</dbReference>
<dbReference type="RefSeq" id="WP_003664550.1">
    <property type="nucleotide sequence ID" value="NC_010609.1"/>
</dbReference>
<dbReference type="SMR" id="B2G8W8"/>
<dbReference type="GeneID" id="77191469"/>
<dbReference type="KEGG" id="lrf:LAR_1384"/>
<dbReference type="HOGENOM" id="CLU_095071_2_1_9"/>
<dbReference type="GO" id="GO:0022625">
    <property type="term" value="C:cytosolic large ribosomal subunit"/>
    <property type="evidence" value="ECO:0007669"/>
    <property type="project" value="TreeGrafter"/>
</dbReference>
<dbReference type="GO" id="GO:0070180">
    <property type="term" value="F:large ribosomal subunit rRNA binding"/>
    <property type="evidence" value="ECO:0007669"/>
    <property type="project" value="TreeGrafter"/>
</dbReference>
<dbReference type="GO" id="GO:0003735">
    <property type="term" value="F:structural constituent of ribosome"/>
    <property type="evidence" value="ECO:0007669"/>
    <property type="project" value="InterPro"/>
</dbReference>
<dbReference type="GO" id="GO:0006412">
    <property type="term" value="P:translation"/>
    <property type="evidence" value="ECO:0007669"/>
    <property type="project" value="UniProtKB-UniRule"/>
</dbReference>
<dbReference type="CDD" id="cd00337">
    <property type="entry name" value="Ribosomal_uL14"/>
    <property type="match status" value="1"/>
</dbReference>
<dbReference type="FunFam" id="2.40.150.20:FF:000001">
    <property type="entry name" value="50S ribosomal protein L14"/>
    <property type="match status" value="1"/>
</dbReference>
<dbReference type="Gene3D" id="2.40.150.20">
    <property type="entry name" value="Ribosomal protein L14"/>
    <property type="match status" value="1"/>
</dbReference>
<dbReference type="HAMAP" id="MF_01367">
    <property type="entry name" value="Ribosomal_uL14"/>
    <property type="match status" value="1"/>
</dbReference>
<dbReference type="InterPro" id="IPR000218">
    <property type="entry name" value="Ribosomal_uL14"/>
</dbReference>
<dbReference type="InterPro" id="IPR005745">
    <property type="entry name" value="Ribosomal_uL14_bac-type"/>
</dbReference>
<dbReference type="InterPro" id="IPR019972">
    <property type="entry name" value="Ribosomal_uL14_CS"/>
</dbReference>
<dbReference type="InterPro" id="IPR036853">
    <property type="entry name" value="Ribosomal_uL14_sf"/>
</dbReference>
<dbReference type="NCBIfam" id="TIGR01067">
    <property type="entry name" value="rplN_bact"/>
    <property type="match status" value="1"/>
</dbReference>
<dbReference type="PANTHER" id="PTHR11761">
    <property type="entry name" value="50S/60S RIBOSOMAL PROTEIN L14/L23"/>
    <property type="match status" value="1"/>
</dbReference>
<dbReference type="PANTHER" id="PTHR11761:SF3">
    <property type="entry name" value="LARGE RIBOSOMAL SUBUNIT PROTEIN UL14M"/>
    <property type="match status" value="1"/>
</dbReference>
<dbReference type="Pfam" id="PF00238">
    <property type="entry name" value="Ribosomal_L14"/>
    <property type="match status" value="1"/>
</dbReference>
<dbReference type="SMART" id="SM01374">
    <property type="entry name" value="Ribosomal_L14"/>
    <property type="match status" value="1"/>
</dbReference>
<dbReference type="SUPFAM" id="SSF50193">
    <property type="entry name" value="Ribosomal protein L14"/>
    <property type="match status" value="1"/>
</dbReference>
<dbReference type="PROSITE" id="PS00049">
    <property type="entry name" value="RIBOSOMAL_L14"/>
    <property type="match status" value="1"/>
</dbReference>